<proteinExistence type="evidence at protein level"/>
<dbReference type="EMBL" id="ABKW02000002">
    <property type="protein sequence ID" value="EDU39415.1"/>
    <property type="molecule type" value="Genomic_DNA"/>
</dbReference>
<dbReference type="HOGENOM" id="CLU_939097_0_0_9"/>
<dbReference type="GO" id="GO:0043592">
    <property type="term" value="C:exosporium"/>
    <property type="evidence" value="ECO:0000314"/>
    <property type="project" value="UniProtKB"/>
</dbReference>
<reference key="1">
    <citation type="submission" date="2008-05" db="EMBL/GenBank/DDBJ databases">
        <title>Draft genome sequence of Clostridium sporogenes ATCC 15579.</title>
        <authorList>
            <person name="Sudarsanam P."/>
            <person name="Ley R."/>
            <person name="Guruge J."/>
            <person name="Turnbaugh P.J."/>
            <person name="Mahowald M."/>
            <person name="Liep D."/>
            <person name="Gordon J."/>
            <person name="Fulton L."/>
            <person name="Clifton S."/>
            <person name="Fulton B."/>
            <person name="Xu J."/>
            <person name="Minx P."/>
            <person name="Pepin K.H."/>
            <person name="Johnson M."/>
            <person name="Thiruvilangam P."/>
            <person name="Bhonagiri V."/>
            <person name="Nash W.E."/>
            <person name="Mardis E.R."/>
            <person name="Wilson R.K."/>
        </authorList>
    </citation>
    <scope>NUCLEOTIDE SEQUENCE [LARGE SCALE GENOMIC DNA]</scope>
    <source>
        <strain>ATCC 15579</strain>
    </source>
</reference>
<reference key="2">
    <citation type="journal article" date="2016" name="Food Microbiol.">
        <title>Characterization of the spore surface and exosporium proteins of Clostridium sporogenes; implications for Clostridium botulinum group I strains.</title>
        <authorList>
            <person name="Janganan T.K."/>
            <person name="Mullin N."/>
            <person name="Tzokov S.B."/>
            <person name="Stringer S."/>
            <person name="Fagan R.P."/>
            <person name="Hobbs J.K."/>
            <person name="Moir A."/>
            <person name="Bullough P.A."/>
        </authorList>
    </citation>
    <scope>IDENTIFICATION BY MASS SPECTROMETRY</scope>
    <scope>SUBCELLULAR LOCATION</scope>
    <source>
        <strain>NCIMB 701792</strain>
    </source>
</reference>
<evidence type="ECO:0000269" key="1">
    <source>
    </source>
</evidence>
<evidence type="ECO:0000303" key="2">
    <source>
    </source>
</evidence>
<evidence type="ECO:0000312" key="3">
    <source>
        <dbReference type="EMBL" id="EDU39415.1"/>
    </source>
</evidence>
<accession>J7T3V5</accession>
<comment type="subcellular location">
    <subcellularLocation>
        <location evidence="1">Spore wall</location>
    </subcellularLocation>
    <text evidence="1">Localizes to the exosporium.</text>
</comment>
<feature type="chain" id="PRO_0000441670" description="Exosporium protein A">
    <location>
        <begin position="1"/>
        <end position="308"/>
    </location>
</feature>
<organism>
    <name type="scientific">Clostridium sporogenes (strain ATCC 15579)</name>
    <dbReference type="NCBI Taxonomy" id="471871"/>
    <lineage>
        <taxon>Bacteria</taxon>
        <taxon>Bacillati</taxon>
        <taxon>Bacillota</taxon>
        <taxon>Clostridia</taxon>
        <taxon>Eubacteriales</taxon>
        <taxon>Clostridiaceae</taxon>
        <taxon>Clostridium</taxon>
    </lineage>
</organism>
<name>CSXA_CLOS1</name>
<gene>
    <name evidence="2" type="primary">csxA</name>
    <name evidence="3" type="ORF">CLOSPO_00498</name>
</gene>
<sequence length="308" mass="34746">MFLLYEKEDIYMAINSKDFIPRPGFVNKQGCLPDPVEITCIQVPKVFDQCLIKECLKPTDDCEQLCKQIPNITDPAQVRCVGCCKDLKVKVNSVTKCPVSNGKPGHKKVTINFTVTFDVDVDVEINGVIHTETLNFSVNRTITASNLYCPDAIAKTIIGKECTSAEEIDQQFIKLEVVGECLSTDISKIDCDNDCCSCSCTCEDNGDKKVFLCITLGLFIIIKCEIVVQLMVPAYGYCPVPEECKCSHDPCKEFMERELPTLYPPQEMDNLFDDYDERQDERHIHDRKHIEEEEERGNLVTSSIIASN</sequence>
<protein>
    <recommendedName>
        <fullName evidence="2">Exosporium protein A</fullName>
    </recommendedName>
</protein>